<name>ENAP2_ARATH</name>
<feature type="chain" id="PRO_0000454498" description="Trihelix transcription factor ENAP2">
    <location>
        <begin position="1"/>
        <end position="248"/>
    </location>
</feature>
<feature type="DNA-binding region" description="MADF" evidence="3">
    <location>
        <begin position="24"/>
        <end position="113"/>
    </location>
</feature>
<feature type="region of interest" description="Disordered" evidence="5">
    <location>
        <begin position="1"/>
        <end position="20"/>
    </location>
</feature>
<feature type="region of interest" description="Disordered" evidence="5">
    <location>
        <begin position="123"/>
        <end position="150"/>
    </location>
</feature>
<feature type="coiled-coil region" evidence="2">
    <location>
        <begin position="190"/>
        <end position="210"/>
    </location>
</feature>
<feature type="short sequence motif" description="Nuclear localization signal" evidence="4">
    <location>
        <begin position="69"/>
        <end position="76"/>
    </location>
</feature>
<feature type="compositionally biased region" description="Polar residues" evidence="5">
    <location>
        <begin position="1"/>
        <end position="13"/>
    </location>
</feature>
<feature type="compositionally biased region" description="Polar residues" evidence="5">
    <location>
        <begin position="130"/>
        <end position="141"/>
    </location>
</feature>
<feature type="splice variant" id="VSP_061349" description="In isoform 2.">
    <original>KNSH</original>
    <variation>QL</variation>
    <location>
        <begin position="245"/>
        <end position="248"/>
    </location>
</feature>
<proteinExistence type="evidence at protein level"/>
<keyword id="KW-0025">Alternative splicing</keyword>
<keyword id="KW-0175">Coiled coil</keyword>
<keyword id="KW-0238">DNA-binding</keyword>
<keyword id="KW-0936">Ethylene signaling pathway</keyword>
<keyword id="KW-0539">Nucleus</keyword>
<keyword id="KW-1185">Reference proteome</keyword>
<keyword id="KW-0804">Transcription</keyword>
<keyword id="KW-0805">Transcription regulation</keyword>
<accession>Q9FFG0</accession>
<accession>Q94AX7</accession>
<comment type="function">
    <text evidence="1">Probable transcription regulator (By similarity). Promotes histone acetylation during ethylene signaling in an EIN2-dependent manner, thus regulating positively ethylene-responsive genes (By similarity).</text>
</comment>
<comment type="subunit">
    <text evidence="6 7">Interacts with the Agrobacterium tumefaciens virulence protein F (VirF) in the nucleus (PubMed:26571494). Binds to EIN2 C-terminal region in the presence of ethylene (PubMed:27694846).</text>
</comment>
<comment type="subcellular location">
    <subcellularLocation>
        <location evidence="4 6 7">Nucleus</location>
    </subcellularLocation>
    <subcellularLocation>
        <location evidence="1">Nucleus</location>
        <location evidence="1">Nucleoplasm</location>
    </subcellularLocation>
</comment>
<comment type="alternative products">
    <event type="alternative splicing"/>
    <isoform>
        <id>Q9FFG0-1</id>
        <name>1</name>
        <sequence type="displayed"/>
    </isoform>
    <isoform>
        <id>Q9FFG0-2</id>
        <name>2</name>
        <sequence type="described" ref="VSP_061349"/>
    </isoform>
</comment>
<comment type="disruption phenotype">
    <text evidence="7">Reduced ethylene sensitivity.</text>
</comment>
<sequence length="248" mass="28417">METTTPQSKSSVSHRPPLGREDWWSEEATATLVEAWGNRYVKLNHGNLRQNDWKDVADAVNSRHGDNSRKKTDLQCKNRVDTLKKKYKTEKAKLSPSTWRFYNRLDVLIGPVVKKSAGGVVKSAPFKNHLNPTGSNSTGSSLEDDDEDDDEVGDWEFVARKHPRVEEVDLSEGSTCRELATAILKFGEVYERIEGKKQQMMIELEKQRMEVTKEVELKRMNMLMEMQLEIEKSKHRKRASASGKKNSH</sequence>
<gene>
    <name evidence="9" type="primary">ENAP2</name>
    <name evidence="8" type="synonym">VFP5</name>
    <name evidence="11" type="ordered locus">At5g05550</name>
    <name evidence="12" type="ORF">MOP10.9</name>
</gene>
<evidence type="ECO:0000250" key="1">
    <source>
        <dbReference type="UniProtKB" id="Q8VZI9"/>
    </source>
</evidence>
<evidence type="ECO:0000255" key="2"/>
<evidence type="ECO:0000255" key="3">
    <source>
        <dbReference type="PROSITE-ProRule" id="PRU00372"/>
    </source>
</evidence>
<evidence type="ECO:0000255" key="4">
    <source>
        <dbReference type="PROSITE-ProRule" id="PRU00768"/>
    </source>
</evidence>
<evidence type="ECO:0000256" key="5">
    <source>
        <dbReference type="SAM" id="MobiDB-lite"/>
    </source>
</evidence>
<evidence type="ECO:0000269" key="6">
    <source>
    </source>
</evidence>
<evidence type="ECO:0000269" key="7">
    <source>
    </source>
</evidence>
<evidence type="ECO:0000303" key="8">
    <source>
    </source>
</evidence>
<evidence type="ECO:0000303" key="9">
    <source>
    </source>
</evidence>
<evidence type="ECO:0000305" key="10"/>
<evidence type="ECO:0000312" key="11">
    <source>
        <dbReference type="Araport" id="AT5G05550"/>
    </source>
</evidence>
<evidence type="ECO:0000312" key="12">
    <source>
        <dbReference type="EMBL" id="ANM71132.1"/>
    </source>
</evidence>
<organism>
    <name type="scientific">Arabidopsis thaliana</name>
    <name type="common">Mouse-ear cress</name>
    <dbReference type="NCBI Taxonomy" id="3702"/>
    <lineage>
        <taxon>Eukaryota</taxon>
        <taxon>Viridiplantae</taxon>
        <taxon>Streptophyta</taxon>
        <taxon>Embryophyta</taxon>
        <taxon>Tracheophyta</taxon>
        <taxon>Spermatophyta</taxon>
        <taxon>Magnoliopsida</taxon>
        <taxon>eudicotyledons</taxon>
        <taxon>Gunneridae</taxon>
        <taxon>Pentapetalae</taxon>
        <taxon>rosids</taxon>
        <taxon>malvids</taxon>
        <taxon>Brassicales</taxon>
        <taxon>Brassicaceae</taxon>
        <taxon>Camelineae</taxon>
        <taxon>Arabidopsis</taxon>
    </lineage>
</organism>
<protein>
    <recommendedName>
        <fullName evidence="10">Trihelix transcription factor ENAP2</fullName>
        <shortName evidence="10">Trihelix DNA-binding protein ENAP2</shortName>
    </recommendedName>
    <alternativeName>
        <fullName evidence="8">Agrobacterium tumefaciens VirF-interacting protein 5</fullName>
    </alternativeName>
    <alternativeName>
        <fullName evidence="9">EIN2 nuclear associated protein 2</fullName>
    </alternativeName>
</protein>
<dbReference type="EMBL" id="AB005241">
    <property type="protein sequence ID" value="BAB11544.1"/>
    <property type="molecule type" value="Genomic_DNA"/>
</dbReference>
<dbReference type="EMBL" id="CP002688">
    <property type="protein sequence ID" value="AED90887.1"/>
    <property type="molecule type" value="Genomic_DNA"/>
</dbReference>
<dbReference type="EMBL" id="CP002688">
    <property type="protein sequence ID" value="ANM71132.1"/>
    <property type="molecule type" value="Genomic_DNA"/>
</dbReference>
<dbReference type="EMBL" id="AY045635">
    <property type="protein sequence ID" value="AAK73993.1"/>
    <property type="molecule type" value="mRNA"/>
</dbReference>
<dbReference type="EMBL" id="AY059651">
    <property type="protein sequence ID" value="AAL31144.1"/>
    <property type="molecule type" value="mRNA"/>
</dbReference>
<dbReference type="EMBL" id="AK318629">
    <property type="protein sequence ID" value="BAH56744.1"/>
    <property type="molecule type" value="mRNA"/>
</dbReference>
<dbReference type="RefSeq" id="NP_001332681.1">
    <molecule id="Q9FFG0-1"/>
    <property type="nucleotide sequence ID" value="NM_001342823.1"/>
</dbReference>
<dbReference type="RefSeq" id="NP_568158.1">
    <molecule id="Q9FFG0-2"/>
    <property type="nucleotide sequence ID" value="NM_120637.2"/>
</dbReference>
<dbReference type="SMR" id="Q9FFG0"/>
<dbReference type="FunCoup" id="Q9FFG0">
    <property type="interactions" value="20"/>
</dbReference>
<dbReference type="iPTMnet" id="Q9FFG0"/>
<dbReference type="ProteomicsDB" id="176804"/>
<dbReference type="ProteomicsDB" id="176869"/>
<dbReference type="EnsemblPlants" id="AT5G05550.1">
    <molecule id="Q9FFG0-2"/>
    <property type="protein sequence ID" value="AT5G05550.1"/>
    <property type="gene ID" value="AT5G05550"/>
</dbReference>
<dbReference type="EnsemblPlants" id="AT5G05550.3">
    <molecule id="Q9FFG0-1"/>
    <property type="protein sequence ID" value="AT5G05550.3"/>
    <property type="gene ID" value="AT5G05550"/>
</dbReference>
<dbReference type="GeneID" id="830438"/>
<dbReference type="Gramene" id="AT5G05550.1">
    <molecule id="Q9FFG0-2"/>
    <property type="protein sequence ID" value="AT5G05550.1"/>
    <property type="gene ID" value="AT5G05550"/>
</dbReference>
<dbReference type="Gramene" id="AT5G05550.3">
    <molecule id="Q9FFG0-1"/>
    <property type="protein sequence ID" value="AT5G05550.3"/>
    <property type="gene ID" value="AT5G05550"/>
</dbReference>
<dbReference type="KEGG" id="ath:AT5G05550"/>
<dbReference type="Araport" id="AT5G05550"/>
<dbReference type="TAIR" id="AT5G05550">
    <property type="gene designation" value="VFP5"/>
</dbReference>
<dbReference type="HOGENOM" id="CLU_042856_0_1_1"/>
<dbReference type="InParanoid" id="Q9FFG0"/>
<dbReference type="OMA" id="ADQISHR"/>
<dbReference type="PhylomeDB" id="Q9FFG0"/>
<dbReference type="PRO" id="PR:Q9FFG0"/>
<dbReference type="Proteomes" id="UP000006548">
    <property type="component" value="Chromosome 5"/>
</dbReference>
<dbReference type="ExpressionAtlas" id="Q9FFG0">
    <property type="expression patterns" value="baseline and differential"/>
</dbReference>
<dbReference type="GO" id="GO:0005654">
    <property type="term" value="C:nucleoplasm"/>
    <property type="evidence" value="ECO:0007669"/>
    <property type="project" value="UniProtKB-SubCell"/>
</dbReference>
<dbReference type="GO" id="GO:0005634">
    <property type="term" value="C:nucleus"/>
    <property type="evidence" value="ECO:0000314"/>
    <property type="project" value="UniProtKB"/>
</dbReference>
<dbReference type="GO" id="GO:0003677">
    <property type="term" value="F:DNA binding"/>
    <property type="evidence" value="ECO:0007669"/>
    <property type="project" value="UniProtKB-KW"/>
</dbReference>
<dbReference type="GO" id="GO:0009873">
    <property type="term" value="P:ethylene-activated signaling pathway"/>
    <property type="evidence" value="ECO:0000315"/>
    <property type="project" value="UniProtKB"/>
</dbReference>
<dbReference type="GO" id="GO:0010468">
    <property type="term" value="P:regulation of gene expression"/>
    <property type="evidence" value="ECO:0000250"/>
    <property type="project" value="UniProtKB"/>
</dbReference>
<dbReference type="FunFam" id="1.10.10.60:FF:000104">
    <property type="entry name" value="trihelix transcription factor ASIL2"/>
    <property type="match status" value="1"/>
</dbReference>
<dbReference type="Gene3D" id="1.10.10.60">
    <property type="entry name" value="Homeodomain-like"/>
    <property type="match status" value="1"/>
</dbReference>
<dbReference type="InterPro" id="IPR044823">
    <property type="entry name" value="ASIL1/2-like"/>
</dbReference>
<dbReference type="InterPro" id="IPR044822">
    <property type="entry name" value="Myb_DNA-bind_4"/>
</dbReference>
<dbReference type="PANTHER" id="PTHR31307">
    <property type="entry name" value="TRIHELIX TRANSCRIPTION FACTOR ASIL2"/>
    <property type="match status" value="1"/>
</dbReference>
<dbReference type="PANTHER" id="PTHR31307:SF40">
    <property type="entry name" value="TRIHELIX TRANSCRIPTION FACTOR ENAP1-RELATED"/>
    <property type="match status" value="1"/>
</dbReference>
<dbReference type="Pfam" id="PF13837">
    <property type="entry name" value="Myb_DNA-bind_4"/>
    <property type="match status" value="1"/>
</dbReference>
<reference key="1">
    <citation type="journal article" date="1997" name="DNA Res.">
        <title>Structural analysis of Arabidopsis thaliana chromosome 5. I. Sequence features of the 1.6 Mb regions covered by twenty physically assigned P1 clones.</title>
        <authorList>
            <person name="Sato S."/>
            <person name="Kotani H."/>
            <person name="Nakamura Y."/>
            <person name="Kaneko T."/>
            <person name="Asamizu E."/>
            <person name="Fukami M."/>
            <person name="Miyajima N."/>
            <person name="Tabata S."/>
        </authorList>
    </citation>
    <scope>NUCLEOTIDE SEQUENCE [LARGE SCALE GENOMIC DNA]</scope>
    <source>
        <strain>cv. Columbia</strain>
    </source>
</reference>
<reference key="2">
    <citation type="journal article" date="2017" name="Plant J.">
        <title>Araport11: a complete reannotation of the Arabidopsis thaliana reference genome.</title>
        <authorList>
            <person name="Cheng C.Y."/>
            <person name="Krishnakumar V."/>
            <person name="Chan A.P."/>
            <person name="Thibaud-Nissen F."/>
            <person name="Schobel S."/>
            <person name="Town C.D."/>
        </authorList>
    </citation>
    <scope>GENOME REANNOTATION</scope>
    <source>
        <strain>cv. Columbia</strain>
    </source>
</reference>
<reference key="3">
    <citation type="journal article" date="2003" name="Science">
        <title>Empirical analysis of transcriptional activity in the Arabidopsis genome.</title>
        <authorList>
            <person name="Yamada K."/>
            <person name="Lim J."/>
            <person name="Dale J.M."/>
            <person name="Chen H."/>
            <person name="Shinn P."/>
            <person name="Palm C.J."/>
            <person name="Southwick A.M."/>
            <person name="Wu H.C."/>
            <person name="Kim C.J."/>
            <person name="Nguyen M."/>
            <person name="Pham P.K."/>
            <person name="Cheuk R.F."/>
            <person name="Karlin-Newmann G."/>
            <person name="Liu S.X."/>
            <person name="Lam B."/>
            <person name="Sakano H."/>
            <person name="Wu T."/>
            <person name="Yu G."/>
            <person name="Miranda M."/>
            <person name="Quach H.L."/>
            <person name="Tripp M."/>
            <person name="Chang C.H."/>
            <person name="Lee J.M."/>
            <person name="Toriumi M.J."/>
            <person name="Chan M.M."/>
            <person name="Tang C.C."/>
            <person name="Onodera C.S."/>
            <person name="Deng J.M."/>
            <person name="Akiyama K."/>
            <person name="Ansari Y."/>
            <person name="Arakawa T."/>
            <person name="Banh J."/>
            <person name="Banno F."/>
            <person name="Bowser L."/>
            <person name="Brooks S.Y."/>
            <person name="Carninci P."/>
            <person name="Chao Q."/>
            <person name="Choy N."/>
            <person name="Enju A."/>
            <person name="Goldsmith A.D."/>
            <person name="Gurjal M."/>
            <person name="Hansen N.F."/>
            <person name="Hayashizaki Y."/>
            <person name="Johnson-Hopson C."/>
            <person name="Hsuan V.W."/>
            <person name="Iida K."/>
            <person name="Karnes M."/>
            <person name="Khan S."/>
            <person name="Koesema E."/>
            <person name="Ishida J."/>
            <person name="Jiang P.X."/>
            <person name="Jones T."/>
            <person name="Kawai J."/>
            <person name="Kamiya A."/>
            <person name="Meyers C."/>
            <person name="Nakajima M."/>
            <person name="Narusaka M."/>
            <person name="Seki M."/>
            <person name="Sakurai T."/>
            <person name="Satou M."/>
            <person name="Tamse R."/>
            <person name="Vaysberg M."/>
            <person name="Wallender E.K."/>
            <person name="Wong C."/>
            <person name="Yamamura Y."/>
            <person name="Yuan S."/>
            <person name="Shinozaki K."/>
            <person name="Davis R.W."/>
            <person name="Theologis A."/>
            <person name="Ecker J.R."/>
        </authorList>
    </citation>
    <scope>NUCLEOTIDE SEQUENCE [LARGE SCALE MRNA] (ISOFORM 2)</scope>
    <source>
        <strain>cv. Columbia</strain>
    </source>
</reference>
<reference key="4">
    <citation type="journal article" date="2009" name="DNA Res.">
        <title>Analysis of multiple occurrences of alternative splicing events in Arabidopsis thaliana using novel sequenced full-length cDNAs.</title>
        <authorList>
            <person name="Iida K."/>
            <person name="Fukami-Kobayashi K."/>
            <person name="Toyoda A."/>
            <person name="Sakaki Y."/>
            <person name="Kobayashi M."/>
            <person name="Seki M."/>
            <person name="Shinozaki K."/>
        </authorList>
    </citation>
    <scope>NUCLEOTIDE SEQUENCE [LARGE SCALE MRNA] (ISOFORM 1)</scope>
    <source>
        <strain>cv. Columbia</strain>
    </source>
</reference>
<reference key="5">
    <citation type="journal article" date="2015" name="PLoS ONE">
        <title>Interaction of Arabidopsis trihelix-domain transcription factors VFP3 and VFP5 with Agrobacterium virulence protein VirF.</title>
        <authorList>
            <person name="Garcia-Cano E."/>
            <person name="Magori S."/>
            <person name="Sun Q."/>
            <person name="Ding Z."/>
            <person name="Lazarowitz S.G."/>
            <person name="Citovsky V."/>
        </authorList>
    </citation>
    <scope>INTERACTION WITH AGROBACTERIUM TUMEFACIENS VIRULENCE PROTEIN VIRF</scope>
    <scope>SUBCELLULAR LOCATION</scope>
    <source>
        <strain>cv. Columbia</strain>
    </source>
</reference>
<reference key="6">
    <citation type="journal article" date="2016" name="Nat. Commun.">
        <title>EIN2-dependent regulation of acetylation of histone H3K14 and non-canonical histone H3K23 in ethylene signalling.</title>
        <authorList>
            <person name="Zhang F."/>
            <person name="Qi B."/>
            <person name="Wang L."/>
            <person name="Zhao B."/>
            <person name="Rode S."/>
            <person name="Riggan N.D."/>
            <person name="Ecker J.R."/>
            <person name="Qiao H."/>
        </authorList>
    </citation>
    <scope>FUNCTION</scope>
    <scope>DISRUPTION PHENOTYPE</scope>
    <scope>INTERACTION WITH EIN2</scope>
    <scope>SUBCELLULAR LOCATION</scope>
    <source>
        <strain>cv. Columbia</strain>
    </source>
</reference>